<dbReference type="EMBL" id="AB102686">
    <property type="protein sequence ID" value="BAC56852.1"/>
    <property type="molecule type" value="mRNA"/>
</dbReference>
<dbReference type="SMR" id="Q76H85"/>
<dbReference type="GO" id="GO:0000786">
    <property type="term" value="C:nucleosome"/>
    <property type="evidence" value="ECO:0007669"/>
    <property type="project" value="UniProtKB-KW"/>
</dbReference>
<dbReference type="GO" id="GO:0005634">
    <property type="term" value="C:nucleus"/>
    <property type="evidence" value="ECO:0007669"/>
    <property type="project" value="UniProtKB-SubCell"/>
</dbReference>
<dbReference type="GO" id="GO:0003677">
    <property type="term" value="F:DNA binding"/>
    <property type="evidence" value="ECO:0007669"/>
    <property type="project" value="UniProtKB-KW"/>
</dbReference>
<dbReference type="GO" id="GO:0046982">
    <property type="term" value="F:protein heterodimerization activity"/>
    <property type="evidence" value="ECO:0007669"/>
    <property type="project" value="InterPro"/>
</dbReference>
<dbReference type="GO" id="GO:0030527">
    <property type="term" value="F:structural constituent of chromatin"/>
    <property type="evidence" value="ECO:0007669"/>
    <property type="project" value="InterPro"/>
</dbReference>
<dbReference type="CDD" id="cd22912">
    <property type="entry name" value="HFD_H4"/>
    <property type="match status" value="1"/>
</dbReference>
<dbReference type="FunFam" id="1.10.20.10:FF:000002">
    <property type="entry name" value="Histone H4"/>
    <property type="match status" value="1"/>
</dbReference>
<dbReference type="Gene3D" id="1.10.20.10">
    <property type="entry name" value="Histone, subunit A"/>
    <property type="match status" value="1"/>
</dbReference>
<dbReference type="InterPro" id="IPR035425">
    <property type="entry name" value="CENP-T/H4_C"/>
</dbReference>
<dbReference type="InterPro" id="IPR009072">
    <property type="entry name" value="Histone-fold"/>
</dbReference>
<dbReference type="InterPro" id="IPR001951">
    <property type="entry name" value="Histone_H4"/>
</dbReference>
<dbReference type="InterPro" id="IPR019809">
    <property type="entry name" value="Histone_H4_CS"/>
</dbReference>
<dbReference type="PANTHER" id="PTHR10484">
    <property type="entry name" value="HISTONE H4"/>
    <property type="match status" value="1"/>
</dbReference>
<dbReference type="Pfam" id="PF15511">
    <property type="entry name" value="CENP-T_C"/>
    <property type="match status" value="1"/>
</dbReference>
<dbReference type="PRINTS" id="PR00623">
    <property type="entry name" value="HISTONEH4"/>
</dbReference>
<dbReference type="SMART" id="SM00417">
    <property type="entry name" value="H4"/>
    <property type="match status" value="1"/>
</dbReference>
<dbReference type="SUPFAM" id="SSF47113">
    <property type="entry name" value="Histone-fold"/>
    <property type="match status" value="1"/>
</dbReference>
<dbReference type="PROSITE" id="PS00047">
    <property type="entry name" value="HISTONE_H4"/>
    <property type="match status" value="1"/>
</dbReference>
<keyword id="KW-0007">Acetylation</keyword>
<keyword id="KW-0158">Chromosome</keyword>
<keyword id="KW-0238">DNA-binding</keyword>
<keyword id="KW-0488">Methylation</keyword>
<keyword id="KW-0544">Nucleosome core</keyword>
<keyword id="KW-0539">Nucleus</keyword>
<evidence type="ECO:0000250" key="1"/>
<evidence type="ECO:0000256" key="2">
    <source>
        <dbReference type="SAM" id="MobiDB-lite"/>
    </source>
</evidence>
<evidence type="ECO:0000305" key="3"/>
<feature type="initiator methionine" description="Removed" evidence="1">
    <location>
        <position position="1"/>
    </location>
</feature>
<feature type="chain" id="PRO_0000158359" description="Histone H4">
    <location>
        <begin position="2"/>
        <end position="103"/>
    </location>
</feature>
<feature type="DNA-binding region">
    <location>
        <begin position="17"/>
        <end position="21"/>
    </location>
</feature>
<feature type="region of interest" description="Disordered" evidence="2">
    <location>
        <begin position="1"/>
        <end position="20"/>
    </location>
</feature>
<feature type="compositionally biased region" description="Gly residues" evidence="2">
    <location>
        <begin position="1"/>
        <end position="14"/>
    </location>
</feature>
<feature type="modified residue" description="N-acetylserine" evidence="1">
    <location>
        <position position="2"/>
    </location>
</feature>
<feature type="modified residue" description="N6-acetyllysine" evidence="1">
    <location>
        <position position="17"/>
    </location>
</feature>
<feature type="modified residue" description="N6-methyllysine" evidence="1">
    <location>
        <position position="21"/>
    </location>
</feature>
<organism>
    <name type="scientific">Silene latifolia</name>
    <name type="common">White campion</name>
    <name type="synonym">Bladder campion</name>
    <dbReference type="NCBI Taxonomy" id="37657"/>
    <lineage>
        <taxon>Eukaryota</taxon>
        <taxon>Viridiplantae</taxon>
        <taxon>Streptophyta</taxon>
        <taxon>Embryophyta</taxon>
        <taxon>Tracheophyta</taxon>
        <taxon>Spermatophyta</taxon>
        <taxon>Magnoliopsida</taxon>
        <taxon>eudicotyledons</taxon>
        <taxon>Gunneridae</taxon>
        <taxon>Pentapetalae</taxon>
        <taxon>Caryophyllales</taxon>
        <taxon>Caryophyllaceae</taxon>
        <taxon>Sileneae</taxon>
        <taxon>Silene</taxon>
        <taxon>Silene subgen. Behenantha</taxon>
        <taxon>Silene sect. Melandrium</taxon>
    </lineage>
</organism>
<proteinExistence type="inferred from homology"/>
<comment type="function">
    <text>Core component of nucleosome. Nucleosomes wrap and compact DNA into chromatin, limiting DNA accessibility to the cellular machineries which require DNA as a template. Histones thereby play a central role in transcription regulation, DNA repair, DNA replication and chromosomal stability. DNA accessibility is regulated via a complex set of post-translational modifications of histones, also called histone code, and nucleosome remodeling.</text>
</comment>
<comment type="subunit">
    <text>The nucleosome is a histone octamer containing two molecules each of H2A, H2B, H3 and H4 assembled in one H3-H4 heterotetramer and two H2A-H2B heterodimers. The octamer wraps approximately 147 bp of DNA.</text>
</comment>
<comment type="subcellular location">
    <subcellularLocation>
        <location evidence="1">Nucleus</location>
    </subcellularLocation>
    <subcellularLocation>
        <location evidence="1">Chromosome</location>
    </subcellularLocation>
</comment>
<comment type="similarity">
    <text evidence="3">Belongs to the histone H4 family.</text>
</comment>
<name>H4_SILLA</name>
<accession>Q76H85</accession>
<sequence>MSGRGKGGKGLGKGGAKRHRKVLRDNIQGITKPAIRRLARRGGVKRISGLIYEETRGVLKIFLENVIRDAVTYTEHARRKTVTAMDVVYALKRQGRTLYGFGG</sequence>
<reference key="1">
    <citation type="journal article" date="2004" name="Plant Cell Physiol.">
        <title>Sex-specific cell division during development of unisexual flowers in the dioecious plant Silene latifolia.</title>
        <authorList>
            <person name="Matsunaga S."/>
            <person name="Uchida W."/>
            <person name="Kawano S."/>
        </authorList>
    </citation>
    <scope>NUCLEOTIDE SEQUENCE [MRNA]</scope>
    <source>
        <tissue>Flower bud</tissue>
    </source>
</reference>
<protein>
    <recommendedName>
        <fullName>Histone H4</fullName>
    </recommendedName>
</protein>
<gene>
    <name type="primary">SlH4</name>
</gene>